<protein>
    <recommendedName>
        <fullName evidence="1">Large ribosomal subunit protein uL24</fullName>
    </recommendedName>
    <alternativeName>
        <fullName evidence="2">50S ribosomal protein L24</fullName>
    </alternativeName>
</protein>
<organism>
    <name type="scientific">Mesomycoplasma hyopneumoniae (strain J / ATCC 25934 / NCTC 10110)</name>
    <name type="common">Mycoplasma hyopneumoniae</name>
    <dbReference type="NCBI Taxonomy" id="262719"/>
    <lineage>
        <taxon>Bacteria</taxon>
        <taxon>Bacillati</taxon>
        <taxon>Mycoplasmatota</taxon>
        <taxon>Mycoplasmoidales</taxon>
        <taxon>Metamycoplasmataceae</taxon>
        <taxon>Mesomycoplasma</taxon>
    </lineage>
</organism>
<feature type="chain" id="PRO_0000241622" description="Large ribosomal subunit protein uL24">
    <location>
        <begin position="1"/>
        <end position="107"/>
    </location>
</feature>
<sequence length="107" mass="11552">MGKIRKNDTVVVLSGDDKGKQGAVLELIPAKKAAIVKGVNIKTKHRKPSNKNTSGEIITFEAPILLSKLALVAKKATKDKPAIPTRVGFKIENKKKIRIAKKTGKAI</sequence>
<accession>Q4AAF1</accession>
<dbReference type="EMBL" id="AE017243">
    <property type="protein sequence ID" value="AAZ44270.1"/>
    <property type="molecule type" value="Genomic_DNA"/>
</dbReference>
<dbReference type="RefSeq" id="WP_011206036.1">
    <property type="nucleotide sequence ID" value="NC_007295.1"/>
</dbReference>
<dbReference type="SMR" id="Q4AAF1"/>
<dbReference type="GeneID" id="41334482"/>
<dbReference type="KEGG" id="mhj:MHJ_0179"/>
<dbReference type="eggNOG" id="COG0198">
    <property type="taxonomic scope" value="Bacteria"/>
</dbReference>
<dbReference type="HOGENOM" id="CLU_093315_2_2_14"/>
<dbReference type="OrthoDB" id="9807419at2"/>
<dbReference type="Proteomes" id="UP000000548">
    <property type="component" value="Chromosome"/>
</dbReference>
<dbReference type="GO" id="GO:1990904">
    <property type="term" value="C:ribonucleoprotein complex"/>
    <property type="evidence" value="ECO:0007669"/>
    <property type="project" value="UniProtKB-KW"/>
</dbReference>
<dbReference type="GO" id="GO:0005840">
    <property type="term" value="C:ribosome"/>
    <property type="evidence" value="ECO:0007669"/>
    <property type="project" value="UniProtKB-KW"/>
</dbReference>
<dbReference type="GO" id="GO:0019843">
    <property type="term" value="F:rRNA binding"/>
    <property type="evidence" value="ECO:0007669"/>
    <property type="project" value="UniProtKB-UniRule"/>
</dbReference>
<dbReference type="GO" id="GO:0003735">
    <property type="term" value="F:structural constituent of ribosome"/>
    <property type="evidence" value="ECO:0007669"/>
    <property type="project" value="InterPro"/>
</dbReference>
<dbReference type="GO" id="GO:0006412">
    <property type="term" value="P:translation"/>
    <property type="evidence" value="ECO:0007669"/>
    <property type="project" value="UniProtKB-UniRule"/>
</dbReference>
<dbReference type="CDD" id="cd06089">
    <property type="entry name" value="KOW_RPL26"/>
    <property type="match status" value="1"/>
</dbReference>
<dbReference type="Gene3D" id="2.30.30.30">
    <property type="match status" value="1"/>
</dbReference>
<dbReference type="HAMAP" id="MF_01326_B">
    <property type="entry name" value="Ribosomal_uL24_B"/>
    <property type="match status" value="1"/>
</dbReference>
<dbReference type="InterPro" id="IPR005824">
    <property type="entry name" value="KOW"/>
</dbReference>
<dbReference type="InterPro" id="IPR014722">
    <property type="entry name" value="Rib_uL2_dom2"/>
</dbReference>
<dbReference type="InterPro" id="IPR003256">
    <property type="entry name" value="Ribosomal_uL24"/>
</dbReference>
<dbReference type="InterPro" id="IPR005825">
    <property type="entry name" value="Ribosomal_uL24_CS"/>
</dbReference>
<dbReference type="InterPro" id="IPR041988">
    <property type="entry name" value="Ribosomal_uL24_KOW"/>
</dbReference>
<dbReference type="InterPro" id="IPR008991">
    <property type="entry name" value="Translation_prot_SH3-like_sf"/>
</dbReference>
<dbReference type="NCBIfam" id="TIGR01079">
    <property type="entry name" value="rplX_bact"/>
    <property type="match status" value="1"/>
</dbReference>
<dbReference type="PANTHER" id="PTHR12903">
    <property type="entry name" value="MITOCHONDRIAL RIBOSOMAL PROTEIN L24"/>
    <property type="match status" value="1"/>
</dbReference>
<dbReference type="Pfam" id="PF00467">
    <property type="entry name" value="KOW"/>
    <property type="match status" value="1"/>
</dbReference>
<dbReference type="Pfam" id="PF17136">
    <property type="entry name" value="ribosomal_L24"/>
    <property type="match status" value="1"/>
</dbReference>
<dbReference type="SMART" id="SM00739">
    <property type="entry name" value="KOW"/>
    <property type="match status" value="1"/>
</dbReference>
<dbReference type="SUPFAM" id="SSF50104">
    <property type="entry name" value="Translation proteins SH3-like domain"/>
    <property type="match status" value="1"/>
</dbReference>
<dbReference type="PROSITE" id="PS01108">
    <property type="entry name" value="RIBOSOMAL_L24"/>
    <property type="match status" value="1"/>
</dbReference>
<name>RL24_MESHJ</name>
<reference key="1">
    <citation type="journal article" date="2005" name="J. Bacteriol.">
        <title>Swine and poultry pathogens: the complete genome sequences of two strains of Mycoplasma hyopneumoniae and a strain of Mycoplasma synoviae.</title>
        <authorList>
            <person name="Vasconcelos A.T.R."/>
            <person name="Ferreira H.B."/>
            <person name="Bizarro C.V."/>
            <person name="Bonatto S.L."/>
            <person name="Carvalho M.O."/>
            <person name="Pinto P.M."/>
            <person name="Almeida D.F."/>
            <person name="Almeida L.G.P."/>
            <person name="Almeida R."/>
            <person name="Alves-Junior L."/>
            <person name="Assuncao E.N."/>
            <person name="Azevedo V.A.C."/>
            <person name="Bogo M.R."/>
            <person name="Brigido M.M."/>
            <person name="Brocchi M."/>
            <person name="Burity H.A."/>
            <person name="Camargo A.A."/>
            <person name="Camargo S.S."/>
            <person name="Carepo M.S."/>
            <person name="Carraro D.M."/>
            <person name="de Mattos Cascardo J.C."/>
            <person name="Castro L.A."/>
            <person name="Cavalcanti G."/>
            <person name="Chemale G."/>
            <person name="Collevatti R.G."/>
            <person name="Cunha C.W."/>
            <person name="Dallagiovanna B."/>
            <person name="Dambros B.P."/>
            <person name="Dellagostin O.A."/>
            <person name="Falcao C."/>
            <person name="Fantinatti-Garboggini F."/>
            <person name="Felipe M.S.S."/>
            <person name="Fiorentin L."/>
            <person name="Franco G.R."/>
            <person name="Freitas N.S.A."/>
            <person name="Frias D."/>
            <person name="Grangeiro T.B."/>
            <person name="Grisard E.C."/>
            <person name="Guimaraes C.T."/>
            <person name="Hungria M."/>
            <person name="Jardim S.N."/>
            <person name="Krieger M.A."/>
            <person name="Laurino J.P."/>
            <person name="Lima L.F.A."/>
            <person name="Lopes M.I."/>
            <person name="Loreto E.L.S."/>
            <person name="Madeira H.M.F."/>
            <person name="Manfio G.P."/>
            <person name="Maranhao A.Q."/>
            <person name="Martinkovics C.T."/>
            <person name="Medeiros S.R.B."/>
            <person name="Moreira M.A.M."/>
            <person name="Neiva M."/>
            <person name="Ramalho-Neto C.E."/>
            <person name="Nicolas M.F."/>
            <person name="Oliveira S.C."/>
            <person name="Paixao R.F.C."/>
            <person name="Pedrosa F.O."/>
            <person name="Pena S.D.J."/>
            <person name="Pereira M."/>
            <person name="Pereira-Ferrari L."/>
            <person name="Piffer I."/>
            <person name="Pinto L.S."/>
            <person name="Potrich D.P."/>
            <person name="Salim A.C.M."/>
            <person name="Santos F.R."/>
            <person name="Schmitt R."/>
            <person name="Schneider M.P.C."/>
            <person name="Schrank A."/>
            <person name="Schrank I.S."/>
            <person name="Schuck A.F."/>
            <person name="Seuanez H.N."/>
            <person name="Silva D.W."/>
            <person name="Silva R."/>
            <person name="Silva S.C."/>
            <person name="Soares C.M.A."/>
            <person name="Souza K.R.L."/>
            <person name="Souza R.C."/>
            <person name="Staats C.C."/>
            <person name="Steffens M.B.R."/>
            <person name="Teixeira S.M.R."/>
            <person name="Urmenyi T.P."/>
            <person name="Vainstein M.H."/>
            <person name="Zuccherato L.W."/>
            <person name="Simpson A.J.G."/>
            <person name="Zaha A."/>
        </authorList>
    </citation>
    <scope>NUCLEOTIDE SEQUENCE [LARGE SCALE GENOMIC DNA]</scope>
    <source>
        <strain>J / ATCC 25934 / NCTC 10110</strain>
    </source>
</reference>
<gene>
    <name evidence="1" type="primary">rplX</name>
    <name type="ordered locus">MHJ_0179</name>
</gene>
<keyword id="KW-0687">Ribonucleoprotein</keyword>
<keyword id="KW-0689">Ribosomal protein</keyword>
<keyword id="KW-0694">RNA-binding</keyword>
<keyword id="KW-0699">rRNA-binding</keyword>
<evidence type="ECO:0000255" key="1">
    <source>
        <dbReference type="HAMAP-Rule" id="MF_01326"/>
    </source>
</evidence>
<evidence type="ECO:0000305" key="2"/>
<comment type="function">
    <text evidence="1">One of two assembly initiator proteins, it binds directly to the 5'-end of the 23S rRNA, where it nucleates assembly of the 50S subunit.</text>
</comment>
<comment type="function">
    <text evidence="1">One of the proteins that surrounds the polypeptide exit tunnel on the outside of the subunit.</text>
</comment>
<comment type="subunit">
    <text evidence="1">Part of the 50S ribosomal subunit.</text>
</comment>
<comment type="similarity">
    <text evidence="1">Belongs to the universal ribosomal protein uL24 family.</text>
</comment>
<proteinExistence type="inferred from homology"/>